<evidence type="ECO:0000255" key="1"/>
<evidence type="ECO:0000255" key="2">
    <source>
        <dbReference type="PROSITE-ProRule" id="PRU00192"/>
    </source>
</evidence>
<evidence type="ECO:0000255" key="3">
    <source>
        <dbReference type="PROSITE-ProRule" id="PRU00361"/>
    </source>
</evidence>
<evidence type="ECO:0000256" key="4">
    <source>
        <dbReference type="SAM" id="MobiDB-lite"/>
    </source>
</evidence>
<evidence type="ECO:0000269" key="5">
    <source>
    </source>
</evidence>
<evidence type="ECO:0000269" key="6">
    <source>
    </source>
</evidence>
<evidence type="ECO:0000269" key="7">
    <source>
    </source>
</evidence>
<evidence type="ECO:0000269" key="8">
    <source>
    </source>
</evidence>
<evidence type="ECO:0000269" key="9">
    <source>
    </source>
</evidence>
<evidence type="ECO:0000269" key="10">
    <source>
    </source>
</evidence>
<evidence type="ECO:0000269" key="11">
    <source>
    </source>
</evidence>
<evidence type="ECO:0007744" key="12">
    <source>
    </source>
</evidence>
<evidence type="ECO:0007744" key="13">
    <source>
    </source>
</evidence>
<organism>
    <name type="scientific">Saccharomyces cerevisiae (strain ATCC 204508 / S288c)</name>
    <name type="common">Baker's yeast</name>
    <dbReference type="NCBI Taxonomy" id="559292"/>
    <lineage>
        <taxon>Eukaryota</taxon>
        <taxon>Fungi</taxon>
        <taxon>Dikarya</taxon>
        <taxon>Ascomycota</taxon>
        <taxon>Saccharomycotina</taxon>
        <taxon>Saccharomycetes</taxon>
        <taxon>Saccharomycetales</taxon>
        <taxon>Saccharomycetaceae</taxon>
        <taxon>Saccharomyces</taxon>
    </lineage>
</organism>
<sequence length="482" mass="52774">MSFKGFTKAVSRAPQSFRQKFKMGEQTEDPVYEDAERRFQELEQETKKLSEESKRYSTAVNGMLTHQIGFAKSMEEIFKPISGKMSDPNATIPEDNPQGIEASEQYRAIVAELQETLKPDLALVEEKIVTPCQELLKIITYIRKMATKRNHKKLDLDRHLNTYNKHEKKKEPTAKDEERLYKAQAQVEVAQQEYDYYNDLLKTQLPILFSLEAEFVKPLFVSFYFMQLNIFYTLYNRLQDMKIPYFDLNSDIVESYIAKKGNVEEQTDALTITHFKLGYSKAKLEMTRRKYGVATAEGSPVSGASSGVGYGAGYDPATATSPTPTGYGYGAAAPSYAAQPAAQYGTAAAVGTAAAVGTAAGAAAGAVPGTYPQYAAAQSPPLTGLGFQQSPQQQQGPPPAYSNPLTSPVAGTPAAAVAAAPGVETVTALYDYQAQAAGDLSFPAGAVIEIVQRTPDVNEWWTGRYNGQQGVFPGNYVQLNKN</sequence>
<feature type="initiator methionine" description="Removed" evidence="13">
    <location>
        <position position="1"/>
    </location>
</feature>
<feature type="chain" id="PRO_0000192961" description="Reduced viability upon starvation protein 167">
    <location>
        <begin position="2"/>
        <end position="482"/>
    </location>
</feature>
<feature type="domain" description="BAR" evidence="3">
    <location>
        <begin position="17"/>
        <end position="254"/>
    </location>
</feature>
<feature type="domain" description="SH3" evidence="2">
    <location>
        <begin position="421"/>
        <end position="482"/>
    </location>
</feature>
<feature type="region of interest" description="Disordered" evidence="4">
    <location>
        <begin position="382"/>
        <end position="407"/>
    </location>
</feature>
<feature type="coiled-coil region" evidence="1">
    <location>
        <begin position="31"/>
        <end position="64"/>
    </location>
</feature>
<feature type="coiled-coil region" evidence="1">
    <location>
        <begin position="174"/>
        <end position="204"/>
    </location>
</feature>
<feature type="modified residue" description="N-acetylserine" evidence="13">
    <location>
        <position position="2"/>
    </location>
</feature>
<feature type="modified residue" description="Phosphoserine; by FUS3 and PHO85" evidence="6">
    <location>
        <position position="299"/>
    </location>
</feature>
<feature type="modified residue" description="Phosphoserine; by FUS3 and PHO85" evidence="6">
    <location>
        <position position="321"/>
    </location>
</feature>
<feature type="modified residue" description="Phosphoserine; by FUS3 and PHO85" evidence="6">
    <location>
        <position position="379"/>
    </location>
</feature>
<feature type="cross-link" description="Glycyl lysine isopeptide (Lys-Gly) (interchain with G-Cter in ubiquitin)" evidence="12">
    <location>
        <position position="242"/>
    </location>
</feature>
<feature type="cross-link" description="Glycyl lysine isopeptide (Lys-Gly) (interchain with G-Cter in ubiquitin)" evidence="12">
    <location>
        <position position="481"/>
    </location>
</feature>
<keyword id="KW-0007">Acetylation</keyword>
<keyword id="KW-0009">Actin-binding</keyword>
<keyword id="KW-0175">Coiled coil</keyword>
<keyword id="KW-0963">Cytoplasm</keyword>
<keyword id="KW-0206">Cytoskeleton</keyword>
<keyword id="KW-1017">Isopeptide bond</keyword>
<keyword id="KW-0597">Phosphoprotein</keyword>
<keyword id="KW-1185">Reference proteome</keyword>
<keyword id="KW-0728">SH3 domain</keyword>
<keyword id="KW-0832">Ubl conjugation</keyword>
<name>RV167_YEAST</name>
<proteinExistence type="evidence at protein level"/>
<reference key="1">
    <citation type="journal article" date="1993" name="Mol. Cell. Biol.">
        <title>Alteration of a yeast SH3 protein leads to conditional viability with defects in cytoskeletal and budding patterns.</title>
        <authorList>
            <person name="Bauer F."/>
            <person name="Urdaci M."/>
            <person name="Aigle M."/>
            <person name="Crouzet M."/>
        </authorList>
    </citation>
    <scope>NUCLEOTIDE SEQUENCE [GENOMIC DNA]</scope>
    <source>
        <strain>ATCC 26109 / X2180</strain>
    </source>
</reference>
<reference key="2">
    <citation type="journal article" date="1997" name="Nature">
        <title>The nucleotide sequence of Saccharomyces cerevisiae chromosome IV.</title>
        <authorList>
            <person name="Jacq C."/>
            <person name="Alt-Moerbe J."/>
            <person name="Andre B."/>
            <person name="Arnold W."/>
            <person name="Bahr A."/>
            <person name="Ballesta J.P.G."/>
            <person name="Bargues M."/>
            <person name="Baron L."/>
            <person name="Becker A."/>
            <person name="Biteau N."/>
            <person name="Bloecker H."/>
            <person name="Blugeon C."/>
            <person name="Boskovic J."/>
            <person name="Brandt P."/>
            <person name="Brueckner M."/>
            <person name="Buitrago M.J."/>
            <person name="Coster F."/>
            <person name="Delaveau T."/>
            <person name="del Rey F."/>
            <person name="Dujon B."/>
            <person name="Eide L.G."/>
            <person name="Garcia-Cantalejo J.M."/>
            <person name="Goffeau A."/>
            <person name="Gomez-Peris A."/>
            <person name="Granotier C."/>
            <person name="Hanemann V."/>
            <person name="Hankeln T."/>
            <person name="Hoheisel J.D."/>
            <person name="Jaeger W."/>
            <person name="Jimenez A."/>
            <person name="Jonniaux J.-L."/>
            <person name="Kraemer C."/>
            <person name="Kuester H."/>
            <person name="Laamanen P."/>
            <person name="Legros Y."/>
            <person name="Louis E.J."/>
            <person name="Moeller-Rieker S."/>
            <person name="Monnet A."/>
            <person name="Moro M."/>
            <person name="Mueller-Auer S."/>
            <person name="Nussbaumer B."/>
            <person name="Paricio N."/>
            <person name="Paulin L."/>
            <person name="Perea J."/>
            <person name="Perez-Alonso M."/>
            <person name="Perez-Ortin J.E."/>
            <person name="Pohl T.M."/>
            <person name="Prydz H."/>
            <person name="Purnelle B."/>
            <person name="Rasmussen S.W."/>
            <person name="Remacha M.A."/>
            <person name="Revuelta J.L."/>
            <person name="Rieger M."/>
            <person name="Salom D."/>
            <person name="Saluz H.P."/>
            <person name="Saiz J.E."/>
            <person name="Saren A.-M."/>
            <person name="Schaefer M."/>
            <person name="Scharfe M."/>
            <person name="Schmidt E.R."/>
            <person name="Schneider C."/>
            <person name="Scholler P."/>
            <person name="Schwarz S."/>
            <person name="Soler-Mira A."/>
            <person name="Urrestarazu L.A."/>
            <person name="Verhasselt P."/>
            <person name="Vissers S."/>
            <person name="Voet M."/>
            <person name="Volckaert G."/>
            <person name="Wagner G."/>
            <person name="Wambutt R."/>
            <person name="Wedler E."/>
            <person name="Wedler H."/>
            <person name="Woelfl S."/>
            <person name="Harris D.E."/>
            <person name="Bowman S."/>
            <person name="Brown D."/>
            <person name="Churcher C.M."/>
            <person name="Connor R."/>
            <person name="Dedman K."/>
            <person name="Gentles S."/>
            <person name="Hamlin N."/>
            <person name="Hunt S."/>
            <person name="Jones L."/>
            <person name="McDonald S."/>
            <person name="Murphy L.D."/>
            <person name="Niblett D."/>
            <person name="Odell C."/>
            <person name="Oliver K."/>
            <person name="Rajandream M.A."/>
            <person name="Richards C."/>
            <person name="Shore L."/>
            <person name="Walsh S.V."/>
            <person name="Barrell B.G."/>
            <person name="Dietrich F.S."/>
            <person name="Mulligan J.T."/>
            <person name="Allen E."/>
            <person name="Araujo R."/>
            <person name="Aviles E."/>
            <person name="Berno A."/>
            <person name="Carpenter J."/>
            <person name="Chen E."/>
            <person name="Cherry J.M."/>
            <person name="Chung E."/>
            <person name="Duncan M."/>
            <person name="Hunicke-Smith S."/>
            <person name="Hyman R.W."/>
            <person name="Komp C."/>
            <person name="Lashkari D."/>
            <person name="Lew H."/>
            <person name="Lin D."/>
            <person name="Mosedale D."/>
            <person name="Nakahara K."/>
            <person name="Namath A."/>
            <person name="Oefner P."/>
            <person name="Oh C."/>
            <person name="Petel F.X."/>
            <person name="Roberts D."/>
            <person name="Schramm S."/>
            <person name="Schroeder M."/>
            <person name="Shogren T."/>
            <person name="Shroff N."/>
            <person name="Winant A."/>
            <person name="Yelton M.A."/>
            <person name="Botstein D."/>
            <person name="Davis R.W."/>
            <person name="Johnston M."/>
            <person name="Andrews S."/>
            <person name="Brinkman R."/>
            <person name="Cooper J."/>
            <person name="Ding H."/>
            <person name="Du Z."/>
            <person name="Favello A."/>
            <person name="Fulton L."/>
            <person name="Gattung S."/>
            <person name="Greco T."/>
            <person name="Hallsworth K."/>
            <person name="Hawkins J."/>
            <person name="Hillier L.W."/>
            <person name="Jier M."/>
            <person name="Johnson D."/>
            <person name="Johnston L."/>
            <person name="Kirsten J."/>
            <person name="Kucaba T."/>
            <person name="Langston Y."/>
            <person name="Latreille P."/>
            <person name="Le T."/>
            <person name="Mardis E."/>
            <person name="Menezes S."/>
            <person name="Miller N."/>
            <person name="Nhan M."/>
            <person name="Pauley A."/>
            <person name="Peluso D."/>
            <person name="Rifkin L."/>
            <person name="Riles L."/>
            <person name="Taich A."/>
            <person name="Trevaskis E."/>
            <person name="Vignati D."/>
            <person name="Wilcox L."/>
            <person name="Wohldman P."/>
            <person name="Vaudin M."/>
            <person name="Wilson R."/>
            <person name="Waterston R."/>
            <person name="Albermann K."/>
            <person name="Hani J."/>
            <person name="Heumann K."/>
            <person name="Kleine K."/>
            <person name="Mewes H.-W."/>
            <person name="Zollner A."/>
            <person name="Zaccaria P."/>
        </authorList>
    </citation>
    <scope>NUCLEOTIDE SEQUENCE [LARGE SCALE GENOMIC DNA]</scope>
    <source>
        <strain>ATCC 204508 / S288c</strain>
    </source>
</reference>
<reference key="3">
    <citation type="journal article" date="2014" name="G3 (Bethesda)">
        <title>The reference genome sequence of Saccharomyces cerevisiae: Then and now.</title>
        <authorList>
            <person name="Engel S.R."/>
            <person name="Dietrich F.S."/>
            <person name="Fisk D.G."/>
            <person name="Binkley G."/>
            <person name="Balakrishnan R."/>
            <person name="Costanzo M.C."/>
            <person name="Dwight S.S."/>
            <person name="Hitz B.C."/>
            <person name="Karra K."/>
            <person name="Nash R.S."/>
            <person name="Weng S."/>
            <person name="Wong E.D."/>
            <person name="Lloyd P."/>
            <person name="Skrzypek M.S."/>
            <person name="Miyasato S.R."/>
            <person name="Simison M."/>
            <person name="Cherry J.M."/>
        </authorList>
    </citation>
    <scope>GENOME REANNOTATION</scope>
    <source>
        <strain>ATCC 204508 / S288c</strain>
    </source>
</reference>
<reference key="4">
    <citation type="journal article" date="1995" name="Nat. Struct. Biol.">
        <title>Defining protein interactions with yeast actin in vivo.</title>
        <authorList>
            <person name="Amberg D.C."/>
            <person name="Basart E."/>
            <person name="Botstein D."/>
        </authorList>
    </citation>
    <scope>INTERACTION WITH ACTIN</scope>
</reference>
<reference key="5">
    <citation type="journal article" date="1999" name="Genetics">
        <title>In vivo analysis of the domains of yeast Rvs167p suggests Rvs167p function is mediated through multiple protein interactions.</title>
        <authorList>
            <person name="Colwill K."/>
            <person name="Field D."/>
            <person name="Moore L."/>
            <person name="Friesen J."/>
            <person name="Andrews B."/>
        </authorList>
    </citation>
    <scope>INTERACTION WITH ABP1</scope>
</reference>
<reference key="6">
    <citation type="journal article" date="1998" name="Curr. Biol.">
        <title>Interaction of yeast Rvs167 and Pho85 cyclin-dependent kinase complexes may link the cell cycle to the actin cytoskeleton.</title>
        <authorList>
            <person name="Lee J."/>
            <person name="Colwill K."/>
            <person name="Aneliunas V."/>
            <person name="Tennyson C.N."/>
            <person name="Moore L."/>
            <person name="Ho Y."/>
            <person name="Andrews B.J."/>
        </authorList>
    </citation>
    <scope>PHOSPHORYLATION</scope>
    <scope>INTERACTION WITH PCL2</scope>
</reference>
<reference key="7">
    <citation type="journal article" date="2003" name="Mol. Biol. Cell">
        <title>Regulation of the yeast amphiphysin homologue Rvs167p by phosphorylation.</title>
        <authorList>
            <person name="Friesen H."/>
            <person name="Murphy K."/>
            <person name="Breitkreutz A."/>
            <person name="Tyers M."/>
            <person name="Andrews B.J."/>
        </authorList>
    </citation>
    <scope>PHOSPHORYLATION AT SER-299; SER-321 AND SER-379</scope>
</reference>
<reference key="8">
    <citation type="journal article" date="2003" name="Nature">
        <title>Global analysis of protein expression in yeast.</title>
        <authorList>
            <person name="Ghaemmaghami S."/>
            <person name="Huh W.-K."/>
            <person name="Bower K."/>
            <person name="Howson R.W."/>
            <person name="Belle A."/>
            <person name="Dephoure N."/>
            <person name="O'Shea E.K."/>
            <person name="Weissman J.S."/>
        </authorList>
    </citation>
    <scope>LEVEL OF PROTEIN EXPRESSION [LARGE SCALE ANALYSIS]</scope>
</reference>
<reference key="9">
    <citation type="journal article" date="2003" name="Nat. Biotechnol.">
        <title>A proteomics approach to understanding protein ubiquitination.</title>
        <authorList>
            <person name="Peng J."/>
            <person name="Schwartz D."/>
            <person name="Elias J.E."/>
            <person name="Thoreen C.C."/>
            <person name="Cheng D."/>
            <person name="Marsischky G."/>
            <person name="Roelofs J."/>
            <person name="Finley D."/>
            <person name="Gygi S.P."/>
        </authorList>
    </citation>
    <scope>UBIQUITINATION [LARGE SCALE ANALYSIS] AT LYS-481</scope>
    <scope>IDENTIFICATION BY MASS SPECTROMETRY</scope>
    <source>
        <strain>SUB592</strain>
    </source>
</reference>
<reference key="10">
    <citation type="journal article" date="2005" name="Genetics">
        <title>Interaction of the Saccharomyces cerevisiae cortical actin patch protein Rvs167p with proteins involved in ER to Golgi vesicle trafficking.</title>
        <authorList>
            <person name="Friesen H."/>
            <person name="Colwill K."/>
            <person name="Robertson K."/>
            <person name="Schub O."/>
            <person name="Andrews B."/>
        </authorList>
    </citation>
    <scope>FUNCTION</scope>
    <scope>INTERACTION WITH GYL1 AND GYP5</scope>
</reference>
<reference key="11">
    <citation type="journal article" date="2005" name="J. Biol. Chem.">
        <title>Characterizing the sphingolipid signaling pathway that remediates defects associated with loss of the yeast amphiphysin-like orthologs, Rvs161p and Rvs167p.</title>
        <authorList>
            <person name="Germann M."/>
            <person name="Swain E."/>
            <person name="Bergman L."/>
            <person name="Nickels J.T. Jr."/>
        </authorList>
    </citation>
    <scope>INTERACTION WITH YBR108W</scope>
</reference>
<reference key="12">
    <citation type="journal article" date="2008" name="Mol. Cell. Proteomics">
        <title>A multidimensional chromatography technology for in-depth phosphoproteome analysis.</title>
        <authorList>
            <person name="Albuquerque C.P."/>
            <person name="Smolka M.B."/>
            <person name="Payne S.H."/>
            <person name="Bafna V."/>
            <person name="Eng J."/>
            <person name="Zhou H."/>
        </authorList>
    </citation>
    <scope>IDENTIFICATION BY MASS SPECTROMETRY [LARGE SCALE ANALYSIS]</scope>
</reference>
<reference key="13">
    <citation type="journal article" date="2012" name="Proc. Natl. Acad. Sci. U.S.A.">
        <title>N-terminal acetylome analyses and functional insights of the N-terminal acetyltransferase NatB.</title>
        <authorList>
            <person name="Van Damme P."/>
            <person name="Lasa M."/>
            <person name="Polevoda B."/>
            <person name="Gazquez C."/>
            <person name="Elosegui-Artola A."/>
            <person name="Kim D.S."/>
            <person name="De Juan-Pardo E."/>
            <person name="Demeyer K."/>
            <person name="Hole K."/>
            <person name="Larrea E."/>
            <person name="Timmerman E."/>
            <person name="Prieto J."/>
            <person name="Arnesen T."/>
            <person name="Sherman F."/>
            <person name="Gevaert K."/>
            <person name="Aldabe R."/>
        </authorList>
    </citation>
    <scope>ACETYLATION [LARGE SCALE ANALYSIS] AT SER-2</scope>
    <scope>CLEAVAGE OF INITIATOR METHIONINE [LARGE SCALE ANALYSIS]</scope>
    <scope>IDENTIFICATION BY MASS SPECTROMETRY [LARGE SCALE ANALYSIS]</scope>
</reference>
<reference key="14">
    <citation type="journal article" date="2012" name="Proteomics">
        <title>Sites of ubiquitin attachment in Saccharomyces cerevisiae.</title>
        <authorList>
            <person name="Starita L.M."/>
            <person name="Lo R.S."/>
            <person name="Eng J.K."/>
            <person name="von Haller P.D."/>
            <person name="Fields S."/>
        </authorList>
    </citation>
    <scope>UBIQUITINATION [LARGE SCALE ANALYSIS] AT LYS-242 AND LYS-481</scope>
    <scope>IDENTIFICATION BY MASS SPECTROMETRY [LARGE SCALE ANALYSIS]</scope>
</reference>
<protein>
    <recommendedName>
        <fullName>Reduced viability upon starvation protein 167</fullName>
    </recommendedName>
</protein>
<dbReference type="EMBL" id="M92092">
    <property type="protein sequence ID" value="AAA35051.1"/>
    <property type="molecule type" value="Genomic_DNA"/>
</dbReference>
<dbReference type="EMBL" id="U32274">
    <property type="protein sequence ID" value="AAB64830.1"/>
    <property type="molecule type" value="Genomic_DNA"/>
</dbReference>
<dbReference type="EMBL" id="BK006938">
    <property type="protein sequence ID" value="DAA12232.1"/>
    <property type="molecule type" value="Genomic_DNA"/>
</dbReference>
<dbReference type="PIR" id="S40887">
    <property type="entry name" value="S40887"/>
</dbReference>
<dbReference type="RefSeq" id="NP_010676.1">
    <property type="nucleotide sequence ID" value="NM_001180696.1"/>
</dbReference>
<dbReference type="SMR" id="P39743"/>
<dbReference type="BioGRID" id="32449">
    <property type="interactions" value="1024"/>
</dbReference>
<dbReference type="ComplexPortal" id="CPX-1335">
    <property type="entry name" value="RVS161-RVS167 amphiphysin complex"/>
</dbReference>
<dbReference type="DIP" id="DIP-770N"/>
<dbReference type="FunCoup" id="P39743">
    <property type="interactions" value="421"/>
</dbReference>
<dbReference type="IntAct" id="P39743">
    <property type="interactions" value="147"/>
</dbReference>
<dbReference type="MINT" id="P39743"/>
<dbReference type="STRING" id="4932.YDR388W"/>
<dbReference type="MoonDB" id="P39743">
    <property type="type" value="Predicted"/>
</dbReference>
<dbReference type="TCDB" id="8.A.34.2.2">
    <property type="family name" value="the endophilin (endophilin) family"/>
</dbReference>
<dbReference type="GlyGen" id="P39743">
    <property type="glycosylation" value="2 sites"/>
</dbReference>
<dbReference type="iPTMnet" id="P39743"/>
<dbReference type="PaxDb" id="4932-YDR388W"/>
<dbReference type="PeptideAtlas" id="P39743"/>
<dbReference type="EnsemblFungi" id="YDR388W_mRNA">
    <property type="protein sequence ID" value="YDR388W"/>
    <property type="gene ID" value="YDR388W"/>
</dbReference>
<dbReference type="GeneID" id="851996"/>
<dbReference type="KEGG" id="sce:YDR388W"/>
<dbReference type="AGR" id="SGD:S000002796"/>
<dbReference type="SGD" id="S000002796">
    <property type="gene designation" value="RVS167"/>
</dbReference>
<dbReference type="VEuPathDB" id="FungiDB:YDR388W"/>
<dbReference type="eggNOG" id="KOG3771">
    <property type="taxonomic scope" value="Eukaryota"/>
</dbReference>
<dbReference type="GeneTree" id="ENSGT00950000182882"/>
<dbReference type="HOGENOM" id="CLU_025518_0_1_1"/>
<dbReference type="InParanoid" id="P39743"/>
<dbReference type="OMA" id="QEYDYYN"/>
<dbReference type="OrthoDB" id="2159336at2759"/>
<dbReference type="BioCyc" id="YEAST:G3O-29936-MONOMER"/>
<dbReference type="BioGRID-ORCS" id="851996">
    <property type="hits" value="1 hit in 10 CRISPR screens"/>
</dbReference>
<dbReference type="CD-CODE" id="E019EF73">
    <property type="entry name" value="Ede1 condensate"/>
</dbReference>
<dbReference type="PRO" id="PR:P39743"/>
<dbReference type="Proteomes" id="UP000002311">
    <property type="component" value="Chromosome IV"/>
</dbReference>
<dbReference type="RNAct" id="P39743">
    <property type="molecule type" value="protein"/>
</dbReference>
<dbReference type="GO" id="GO:0030479">
    <property type="term" value="C:actin cortical patch"/>
    <property type="evidence" value="ECO:0000314"/>
    <property type="project" value="SGD"/>
</dbReference>
<dbReference type="GO" id="GO:0015629">
    <property type="term" value="C:actin cytoskeleton"/>
    <property type="evidence" value="ECO:0000318"/>
    <property type="project" value="GO_Central"/>
</dbReference>
<dbReference type="GO" id="GO:0005934">
    <property type="term" value="C:cellular bud tip"/>
    <property type="evidence" value="ECO:0000314"/>
    <property type="project" value="SGD"/>
</dbReference>
<dbReference type="GO" id="GO:0005737">
    <property type="term" value="C:cytoplasm"/>
    <property type="evidence" value="ECO:0007005"/>
    <property type="project" value="SGD"/>
</dbReference>
<dbReference type="GO" id="GO:0005829">
    <property type="term" value="C:cytosol"/>
    <property type="evidence" value="ECO:0007005"/>
    <property type="project" value="SGD"/>
</dbReference>
<dbReference type="GO" id="GO:0043332">
    <property type="term" value="C:mating projection tip"/>
    <property type="evidence" value="ECO:0000314"/>
    <property type="project" value="SGD"/>
</dbReference>
<dbReference type="GO" id="GO:0031097">
    <property type="term" value="C:medial cortex"/>
    <property type="evidence" value="ECO:0000318"/>
    <property type="project" value="GO_Central"/>
</dbReference>
<dbReference type="GO" id="GO:1990528">
    <property type="term" value="C:Rvs161p-Rvs167p complex"/>
    <property type="evidence" value="ECO:0000353"/>
    <property type="project" value="SGD"/>
</dbReference>
<dbReference type="GO" id="GO:0003779">
    <property type="term" value="F:actin binding"/>
    <property type="evidence" value="ECO:0007669"/>
    <property type="project" value="UniProtKB-KW"/>
</dbReference>
<dbReference type="GO" id="GO:0005516">
    <property type="term" value="F:calmodulin binding"/>
    <property type="evidence" value="ECO:0000314"/>
    <property type="project" value="SGD"/>
</dbReference>
<dbReference type="GO" id="GO:0008092">
    <property type="term" value="F:cytoskeletal protein binding"/>
    <property type="evidence" value="ECO:0000353"/>
    <property type="project" value="SGD"/>
</dbReference>
<dbReference type="GO" id="GO:0042802">
    <property type="term" value="F:identical protein binding"/>
    <property type="evidence" value="ECO:0000353"/>
    <property type="project" value="IntAct"/>
</dbReference>
<dbReference type="GO" id="GO:0042803">
    <property type="term" value="F:protein homodimerization activity"/>
    <property type="evidence" value="ECO:0000314"/>
    <property type="project" value="SGD"/>
</dbReference>
<dbReference type="GO" id="GO:0051666">
    <property type="term" value="P:actin cortical patch localization"/>
    <property type="evidence" value="ECO:0000315"/>
    <property type="project" value="SGD"/>
</dbReference>
<dbReference type="GO" id="GO:0006897">
    <property type="term" value="P:endocytosis"/>
    <property type="evidence" value="ECO:0000315"/>
    <property type="project" value="SGD"/>
</dbReference>
<dbReference type="GO" id="GO:0060988">
    <property type="term" value="P:lipid tube assembly"/>
    <property type="evidence" value="ECO:0000314"/>
    <property type="project" value="ComplexPortal"/>
</dbReference>
<dbReference type="GO" id="GO:1903475">
    <property type="term" value="P:mitotic actomyosin contractile ring assembly"/>
    <property type="evidence" value="ECO:0000315"/>
    <property type="project" value="SGD"/>
</dbReference>
<dbReference type="GO" id="GO:0097320">
    <property type="term" value="P:plasma membrane tubulation"/>
    <property type="evidence" value="ECO:0000314"/>
    <property type="project" value="ComplexPortal"/>
</dbReference>
<dbReference type="GO" id="GO:0072741">
    <property type="term" value="P:protein localization to cell division site"/>
    <property type="evidence" value="ECO:0000316"/>
    <property type="project" value="SGD"/>
</dbReference>
<dbReference type="GO" id="GO:0030100">
    <property type="term" value="P:regulation of endocytosis"/>
    <property type="evidence" value="ECO:0000314"/>
    <property type="project" value="ComplexPortal"/>
</dbReference>
<dbReference type="GO" id="GO:0016192">
    <property type="term" value="P:vesicle-mediated transport"/>
    <property type="evidence" value="ECO:0000353"/>
    <property type="project" value="SGD"/>
</dbReference>
<dbReference type="CDD" id="cd07599">
    <property type="entry name" value="BAR_Rvs167p"/>
    <property type="match status" value="1"/>
</dbReference>
<dbReference type="FunFam" id="1.20.1270.60:FF:000048">
    <property type="entry name" value="BAR adaptor protein RVS167"/>
    <property type="match status" value="1"/>
</dbReference>
<dbReference type="FunFam" id="2.30.30.40:FF:000189">
    <property type="entry name" value="BAR adaptor protein RVS167"/>
    <property type="match status" value="1"/>
</dbReference>
<dbReference type="Gene3D" id="1.20.1270.60">
    <property type="entry name" value="Arfaptin homology (AH) domain/BAR domain"/>
    <property type="match status" value="1"/>
</dbReference>
<dbReference type="Gene3D" id="2.30.30.40">
    <property type="entry name" value="SH3 Domains"/>
    <property type="match status" value="1"/>
</dbReference>
<dbReference type="InterPro" id="IPR027267">
    <property type="entry name" value="AH/BAR_dom_sf"/>
</dbReference>
<dbReference type="InterPro" id="IPR004148">
    <property type="entry name" value="BAR_dom"/>
</dbReference>
<dbReference type="InterPro" id="IPR046982">
    <property type="entry name" value="BIN3/RVS161-like"/>
</dbReference>
<dbReference type="InterPro" id="IPR036028">
    <property type="entry name" value="SH3-like_dom_sf"/>
</dbReference>
<dbReference type="InterPro" id="IPR001452">
    <property type="entry name" value="SH3_domain"/>
</dbReference>
<dbReference type="PANTHER" id="PTHR47174">
    <property type="entry name" value="BRIDGING INTEGRATOR 3"/>
    <property type="match status" value="1"/>
</dbReference>
<dbReference type="PANTHER" id="PTHR47174:SF1">
    <property type="entry name" value="REDUCED VIABILITY UPON STARVATION PROTEIN 167"/>
    <property type="match status" value="1"/>
</dbReference>
<dbReference type="Pfam" id="PF03114">
    <property type="entry name" value="BAR"/>
    <property type="match status" value="1"/>
</dbReference>
<dbReference type="Pfam" id="PF00018">
    <property type="entry name" value="SH3_1"/>
    <property type="match status" value="1"/>
</dbReference>
<dbReference type="PRINTS" id="PR00452">
    <property type="entry name" value="SH3DOMAIN"/>
</dbReference>
<dbReference type="SMART" id="SM00721">
    <property type="entry name" value="BAR"/>
    <property type="match status" value="1"/>
</dbReference>
<dbReference type="SMART" id="SM00326">
    <property type="entry name" value="SH3"/>
    <property type="match status" value="1"/>
</dbReference>
<dbReference type="SUPFAM" id="SSF103657">
    <property type="entry name" value="BAR/IMD domain-like"/>
    <property type="match status" value="1"/>
</dbReference>
<dbReference type="SUPFAM" id="SSF50044">
    <property type="entry name" value="SH3-domain"/>
    <property type="match status" value="1"/>
</dbReference>
<dbReference type="PROSITE" id="PS51021">
    <property type="entry name" value="BAR"/>
    <property type="match status" value="1"/>
</dbReference>
<dbReference type="PROSITE" id="PS50002">
    <property type="entry name" value="SH3"/>
    <property type="match status" value="1"/>
</dbReference>
<comment type="function">
    <text evidence="9">Component of a cytoskeletal structure that is required for the formation of endocytic vesicles at the plasma membrane level. Could be implicated in cytoskeletal reorganization in response to environmental stresses and could act in the budding site selection mechanism.</text>
</comment>
<comment type="subunit">
    <text evidence="5 8 9 10 11">Binds to actin. Interacts with ABP1, GYL1, GYP5, PCL2 and YBR108W.</text>
</comment>
<comment type="interaction">
    <interactant intactId="EBI-14500">
        <id>P39743</id>
    </interactant>
    <interactant intactId="EBI-2036">
        <id>P15891</id>
        <label>ABP1</label>
    </interactant>
    <organismsDiffer>false</organismsDiffer>
    <experiments>6</experiments>
</comment>
<comment type="interaction">
    <interactant intactId="EBI-14500">
        <id>P39743</id>
    </interactant>
    <interactant intactId="EBI-32973">
        <id>Q12168</id>
        <label>ACF2</label>
    </interactant>
    <organismsDiffer>false</organismsDiffer>
    <experiments>9</experiments>
</comment>
<comment type="interaction">
    <interactant intactId="EBI-14500">
        <id>P39743</id>
    </interactant>
    <interactant intactId="EBI-25556">
        <id>P47129</id>
        <label>ACF4</label>
    </interactant>
    <organismsDiffer>false</organismsDiffer>
    <experiments>5</experiments>
</comment>
<comment type="interaction">
    <interactant intactId="EBI-14500">
        <id>P39743</id>
    </interactant>
    <interactant intactId="EBI-2169">
        <id>P60010</id>
        <label>ACT1</label>
    </interactant>
    <organismsDiffer>false</organismsDiffer>
    <experiments>4</experiments>
</comment>
<comment type="interaction">
    <interactant intactId="EBI-14500">
        <id>P39743</id>
    </interactant>
    <interactant intactId="EBI-21584">
        <id>P38266</id>
        <label>AIM3</label>
    </interactant>
    <organismsDiffer>false</organismsDiffer>
    <experiments>6</experiments>
</comment>
<comment type="interaction">
    <interactant intactId="EBI-14500">
        <id>P39743</id>
    </interactant>
    <interactant intactId="EBI-28798">
        <id>P53933</id>
        <label>APP1</label>
    </interactant>
    <organismsDiffer>false</organismsDiffer>
    <experiments>9</experiments>
</comment>
<comment type="interaction">
    <interactant intactId="EBI-14500">
        <id>P39743</id>
    </interactant>
    <interactant intactId="EBI-37047">
        <id>Q06604</id>
        <label>BSP1</label>
    </interactant>
    <organismsDiffer>false</organismsDiffer>
    <experiments>5</experiments>
</comment>
<comment type="interaction">
    <interactant intactId="EBI-14500">
        <id>P39743</id>
    </interactant>
    <interactant intactId="EBI-21048">
        <id>P38140</id>
        <label>ERT1</label>
    </interactant>
    <organismsDiffer>false</organismsDiffer>
    <experiments>4</experiments>
</comment>
<comment type="interaction">
    <interactant intactId="EBI-14500">
        <id>P39743</id>
    </interactant>
    <interactant intactId="EBI-7968">
        <id>P40956</id>
        <label>GTS1</label>
    </interactant>
    <organismsDiffer>false</organismsDiffer>
    <experiments>4</experiments>
</comment>
<comment type="interaction">
    <interactant intactId="EBI-14500">
        <id>P39743</id>
    </interactant>
    <interactant intactId="EBI-27427">
        <id>Q04322</id>
        <label>GYL1</label>
    </interactant>
    <organismsDiffer>false</organismsDiffer>
    <experiments>8</experiments>
</comment>
<comment type="interaction">
    <interactant intactId="EBI-14500">
        <id>P39743</id>
    </interactant>
    <interactant intactId="EBI-38508">
        <id>Q12344</id>
        <label>GYP5</label>
    </interactant>
    <organismsDiffer>false</organismsDiffer>
    <experiments>6</experiments>
</comment>
<comment type="interaction">
    <interactant intactId="EBI-14500">
        <id>P39743</id>
    </interactant>
    <interactant intactId="EBI-10022">
        <id>Q12446</id>
        <label>LAS17</label>
    </interactant>
    <organismsDiffer>false</organismsDiffer>
    <experiments>14</experiments>
</comment>
<comment type="interaction">
    <interactant intactId="EBI-14500">
        <id>P39743</id>
    </interactant>
    <interactant intactId="EBI-11687">
        <id>Q04439</id>
        <label>MYO5</label>
    </interactant>
    <organismsDiffer>false</organismsDiffer>
    <experiments>3</experiments>
</comment>
<comment type="interaction">
    <interactant intactId="EBI-14500">
        <id>P39743</id>
    </interactant>
    <interactant intactId="EBI-37290">
        <id>Q06833</id>
        <label>NVJ2</label>
    </interactant>
    <organismsDiffer>false</organismsDiffer>
    <experiments>3</experiments>
</comment>
<comment type="interaction">
    <interactant intactId="EBI-14500">
        <id>P39743</id>
    </interactant>
    <interactant intactId="EBI-14490">
        <id>P25343</id>
        <label>RVS161</label>
    </interactant>
    <organismsDiffer>false</organismsDiffer>
    <experiments>17</experiments>
</comment>
<comment type="interaction">
    <interactant intactId="EBI-14500">
        <id>P39743</id>
    </interactant>
    <interactant intactId="EBI-14500">
        <id>P39743</id>
        <label>RVS167</label>
    </interactant>
    <organismsDiffer>false</organismsDiffer>
    <experiments>3</experiments>
</comment>
<comment type="interaction">
    <interactant intactId="EBI-14500">
        <id>P39743</id>
    </interactant>
    <interactant intactId="EBI-16896">
        <id>P32855</id>
        <label>SEC8</label>
    </interactant>
    <organismsDiffer>false</organismsDiffer>
    <experiments>2</experiments>
</comment>
<comment type="interaction">
    <interactant intactId="EBI-14500">
        <id>P39743</id>
    </interactant>
    <interactant intactId="EBI-20502">
        <id>P37370</id>
        <label>VRP1</label>
    </interactant>
    <organismsDiffer>false</organismsDiffer>
    <experiments>3</experiments>
</comment>
<comment type="interaction">
    <interactant intactId="EBI-14500">
        <id>P39743</id>
    </interactant>
    <interactant intactId="EBI-30094">
        <id>Q03780</id>
        <label>YDR239C</label>
    </interactant>
    <organismsDiffer>false</organismsDiffer>
    <experiments>2</experiments>
</comment>
<comment type="subcellular location">
    <subcellularLocation>
        <location>Cytoplasm</location>
        <location>Cytoskeleton</location>
    </subcellularLocation>
</comment>
<comment type="PTM">
    <text evidence="6 11">Phosphorylated redundantly by cyclin-dependent kinase PHO85 in association with PCL1,2-type cyclins or by MAP kinase FUS3. Phosphorylation inhibits interaction with complexes involved in actin cytoskeleton function.</text>
</comment>
<comment type="miscellaneous">
    <text evidence="7">Present with 14600 molecules/cell in log phase SD medium.</text>
</comment>
<accession>P39743</accession>
<accession>D6VT22</accession>
<gene>
    <name type="primary">RVS167</name>
    <name type="ordered locus">YDR388W</name>
    <name type="ORF">D9509.8</name>
</gene>